<dbReference type="EMBL" id="AP002540">
    <property type="protein sequence ID" value="BAB44005.1"/>
    <property type="molecule type" value="Genomic_DNA"/>
</dbReference>
<dbReference type="EMBL" id="AP014957">
    <property type="status" value="NOT_ANNOTATED_CDS"/>
    <property type="molecule type" value="Genomic_DNA"/>
</dbReference>
<dbReference type="EMBL" id="CM000138">
    <property type="protein sequence ID" value="EAZ10545.1"/>
    <property type="molecule type" value="Genomic_DNA"/>
</dbReference>
<dbReference type="RefSeq" id="XP_015645098.1">
    <property type="nucleotide sequence ID" value="XM_015789612.1"/>
</dbReference>
<dbReference type="SMR" id="Q94JJ7"/>
<dbReference type="FunCoup" id="Q94JJ7">
    <property type="interactions" value="1726"/>
</dbReference>
<dbReference type="STRING" id="39947.Q94JJ7"/>
<dbReference type="PaxDb" id="39947-Q94JJ7"/>
<dbReference type="InParanoid" id="Q94JJ7"/>
<dbReference type="Proteomes" id="UP000000763">
    <property type="component" value="Chromosome 1"/>
</dbReference>
<dbReference type="Proteomes" id="UP000007752">
    <property type="component" value="Chromosome 1"/>
</dbReference>
<dbReference type="Proteomes" id="UP000059680">
    <property type="component" value="Chromosome 1"/>
</dbReference>
<dbReference type="GO" id="GO:0000786">
    <property type="term" value="C:nucleosome"/>
    <property type="evidence" value="ECO:0007669"/>
    <property type="project" value="UniProtKB-KW"/>
</dbReference>
<dbReference type="GO" id="GO:0005634">
    <property type="term" value="C:nucleus"/>
    <property type="evidence" value="ECO:0007669"/>
    <property type="project" value="UniProtKB-SubCell"/>
</dbReference>
<dbReference type="GO" id="GO:0003677">
    <property type="term" value="F:DNA binding"/>
    <property type="evidence" value="ECO:0000318"/>
    <property type="project" value="GO_Central"/>
</dbReference>
<dbReference type="GO" id="GO:0046982">
    <property type="term" value="F:protein heterodimerization activity"/>
    <property type="evidence" value="ECO:0007669"/>
    <property type="project" value="InterPro"/>
</dbReference>
<dbReference type="GO" id="GO:0030527">
    <property type="term" value="F:structural constituent of chromatin"/>
    <property type="evidence" value="ECO:0007669"/>
    <property type="project" value="InterPro"/>
</dbReference>
<dbReference type="CDD" id="cd22910">
    <property type="entry name" value="HFD_H2B"/>
    <property type="match status" value="1"/>
</dbReference>
<dbReference type="FunFam" id="1.10.20.10:FF:000014">
    <property type="entry name" value="Histone H2B"/>
    <property type="match status" value="1"/>
</dbReference>
<dbReference type="Gene3D" id="1.10.20.10">
    <property type="entry name" value="Histone, subunit A"/>
    <property type="match status" value="1"/>
</dbReference>
<dbReference type="InterPro" id="IPR009072">
    <property type="entry name" value="Histone-fold"/>
</dbReference>
<dbReference type="InterPro" id="IPR007125">
    <property type="entry name" value="Histone_H2A/H2B/H3"/>
</dbReference>
<dbReference type="InterPro" id="IPR000558">
    <property type="entry name" value="Histone_H2B"/>
</dbReference>
<dbReference type="InterPro" id="IPR055333">
    <property type="entry name" value="HISTONE_H2B_site"/>
</dbReference>
<dbReference type="PANTHER" id="PTHR23428">
    <property type="entry name" value="HISTONE H2B"/>
    <property type="match status" value="1"/>
</dbReference>
<dbReference type="Pfam" id="PF00125">
    <property type="entry name" value="Histone"/>
    <property type="match status" value="1"/>
</dbReference>
<dbReference type="PRINTS" id="PR00621">
    <property type="entry name" value="HISTONEH2B"/>
</dbReference>
<dbReference type="SMART" id="SM00427">
    <property type="entry name" value="H2B"/>
    <property type="match status" value="1"/>
</dbReference>
<dbReference type="SUPFAM" id="SSF47113">
    <property type="entry name" value="Histone-fold"/>
    <property type="match status" value="1"/>
</dbReference>
<dbReference type="PROSITE" id="PS00357">
    <property type="entry name" value="HISTONE_H2B"/>
    <property type="match status" value="1"/>
</dbReference>
<protein>
    <recommendedName>
        <fullName>Histone H2B.3</fullName>
    </recommendedName>
</protein>
<evidence type="ECO:0000250" key="1"/>
<evidence type="ECO:0000256" key="2">
    <source>
        <dbReference type="SAM" id="MobiDB-lite"/>
    </source>
</evidence>
<evidence type="ECO:0000305" key="3"/>
<reference key="1">
    <citation type="journal article" date="2002" name="Nature">
        <title>The genome sequence and structure of rice chromosome 1.</title>
        <authorList>
            <person name="Sasaki T."/>
            <person name="Matsumoto T."/>
            <person name="Yamamoto K."/>
            <person name="Sakata K."/>
            <person name="Baba T."/>
            <person name="Katayose Y."/>
            <person name="Wu J."/>
            <person name="Niimura Y."/>
            <person name="Cheng Z."/>
            <person name="Nagamura Y."/>
            <person name="Antonio B.A."/>
            <person name="Kanamori H."/>
            <person name="Hosokawa S."/>
            <person name="Masukawa M."/>
            <person name="Arikawa K."/>
            <person name="Chiden Y."/>
            <person name="Hayashi M."/>
            <person name="Okamoto M."/>
            <person name="Ando T."/>
            <person name="Aoki H."/>
            <person name="Arita K."/>
            <person name="Hamada M."/>
            <person name="Harada C."/>
            <person name="Hijishita S."/>
            <person name="Honda M."/>
            <person name="Ichikawa Y."/>
            <person name="Idonuma A."/>
            <person name="Iijima M."/>
            <person name="Ikeda M."/>
            <person name="Ikeno M."/>
            <person name="Ito S."/>
            <person name="Ito T."/>
            <person name="Ito Y."/>
            <person name="Ito Y."/>
            <person name="Iwabuchi A."/>
            <person name="Kamiya K."/>
            <person name="Karasawa W."/>
            <person name="Katagiri S."/>
            <person name="Kikuta A."/>
            <person name="Kobayashi N."/>
            <person name="Kono I."/>
            <person name="Machita K."/>
            <person name="Maehara T."/>
            <person name="Mizuno H."/>
            <person name="Mizubayashi T."/>
            <person name="Mukai Y."/>
            <person name="Nagasaki H."/>
            <person name="Nakashima M."/>
            <person name="Nakama Y."/>
            <person name="Nakamichi Y."/>
            <person name="Nakamura M."/>
            <person name="Namiki N."/>
            <person name="Negishi M."/>
            <person name="Ohta I."/>
            <person name="Ono N."/>
            <person name="Saji S."/>
            <person name="Sakai K."/>
            <person name="Shibata M."/>
            <person name="Shimokawa T."/>
            <person name="Shomura A."/>
            <person name="Song J."/>
            <person name="Takazaki Y."/>
            <person name="Terasawa K."/>
            <person name="Tsuji K."/>
            <person name="Waki K."/>
            <person name="Yamagata H."/>
            <person name="Yamane H."/>
            <person name="Yoshiki S."/>
            <person name="Yoshihara R."/>
            <person name="Yukawa K."/>
            <person name="Zhong H."/>
            <person name="Iwama H."/>
            <person name="Endo T."/>
            <person name="Ito H."/>
            <person name="Hahn J.H."/>
            <person name="Kim H.-I."/>
            <person name="Eun M.-Y."/>
            <person name="Yano M."/>
            <person name="Jiang J."/>
            <person name="Gojobori T."/>
        </authorList>
    </citation>
    <scope>NUCLEOTIDE SEQUENCE [LARGE SCALE GENOMIC DNA]</scope>
    <source>
        <strain>cv. Nipponbare</strain>
    </source>
</reference>
<reference key="2">
    <citation type="journal article" date="2005" name="Nature">
        <title>The map-based sequence of the rice genome.</title>
        <authorList>
            <consortium name="International rice genome sequencing project (IRGSP)"/>
        </authorList>
    </citation>
    <scope>NUCLEOTIDE SEQUENCE [LARGE SCALE GENOMIC DNA]</scope>
    <source>
        <strain>cv. Nipponbare</strain>
    </source>
</reference>
<reference key="3">
    <citation type="journal article" date="2013" name="Rice">
        <title>Improvement of the Oryza sativa Nipponbare reference genome using next generation sequence and optical map data.</title>
        <authorList>
            <person name="Kawahara Y."/>
            <person name="de la Bastide M."/>
            <person name="Hamilton J.P."/>
            <person name="Kanamori H."/>
            <person name="McCombie W.R."/>
            <person name="Ouyang S."/>
            <person name="Schwartz D.C."/>
            <person name="Tanaka T."/>
            <person name="Wu J."/>
            <person name="Zhou S."/>
            <person name="Childs K.L."/>
            <person name="Davidson R.M."/>
            <person name="Lin H."/>
            <person name="Quesada-Ocampo L."/>
            <person name="Vaillancourt B."/>
            <person name="Sakai H."/>
            <person name="Lee S.S."/>
            <person name="Kim J."/>
            <person name="Numa H."/>
            <person name="Itoh T."/>
            <person name="Buell C.R."/>
            <person name="Matsumoto T."/>
        </authorList>
    </citation>
    <scope>GENOME REANNOTATION</scope>
    <source>
        <strain>cv. Nipponbare</strain>
    </source>
</reference>
<reference key="4">
    <citation type="journal article" date="2005" name="PLoS Biol.">
        <title>The genomes of Oryza sativa: a history of duplications.</title>
        <authorList>
            <person name="Yu J."/>
            <person name="Wang J."/>
            <person name="Lin W."/>
            <person name="Li S."/>
            <person name="Li H."/>
            <person name="Zhou J."/>
            <person name="Ni P."/>
            <person name="Dong W."/>
            <person name="Hu S."/>
            <person name="Zeng C."/>
            <person name="Zhang J."/>
            <person name="Zhang Y."/>
            <person name="Li R."/>
            <person name="Xu Z."/>
            <person name="Li S."/>
            <person name="Li X."/>
            <person name="Zheng H."/>
            <person name="Cong L."/>
            <person name="Lin L."/>
            <person name="Yin J."/>
            <person name="Geng J."/>
            <person name="Li G."/>
            <person name="Shi J."/>
            <person name="Liu J."/>
            <person name="Lv H."/>
            <person name="Li J."/>
            <person name="Wang J."/>
            <person name="Deng Y."/>
            <person name="Ran L."/>
            <person name="Shi X."/>
            <person name="Wang X."/>
            <person name="Wu Q."/>
            <person name="Li C."/>
            <person name="Ren X."/>
            <person name="Wang J."/>
            <person name="Wang X."/>
            <person name="Li D."/>
            <person name="Liu D."/>
            <person name="Zhang X."/>
            <person name="Ji Z."/>
            <person name="Zhao W."/>
            <person name="Sun Y."/>
            <person name="Zhang Z."/>
            <person name="Bao J."/>
            <person name="Han Y."/>
            <person name="Dong L."/>
            <person name="Ji J."/>
            <person name="Chen P."/>
            <person name="Wu S."/>
            <person name="Liu J."/>
            <person name="Xiao Y."/>
            <person name="Bu D."/>
            <person name="Tan J."/>
            <person name="Yang L."/>
            <person name="Ye C."/>
            <person name="Zhang J."/>
            <person name="Xu J."/>
            <person name="Zhou Y."/>
            <person name="Yu Y."/>
            <person name="Zhang B."/>
            <person name="Zhuang S."/>
            <person name="Wei H."/>
            <person name="Liu B."/>
            <person name="Lei M."/>
            <person name="Yu H."/>
            <person name="Li Y."/>
            <person name="Xu H."/>
            <person name="Wei S."/>
            <person name="He X."/>
            <person name="Fang L."/>
            <person name="Zhang Z."/>
            <person name="Zhang Y."/>
            <person name="Huang X."/>
            <person name="Su Z."/>
            <person name="Tong W."/>
            <person name="Li J."/>
            <person name="Tong Z."/>
            <person name="Li S."/>
            <person name="Ye J."/>
            <person name="Wang L."/>
            <person name="Fang L."/>
            <person name="Lei T."/>
            <person name="Chen C.-S."/>
            <person name="Chen H.-C."/>
            <person name="Xu Z."/>
            <person name="Li H."/>
            <person name="Huang H."/>
            <person name="Zhang F."/>
            <person name="Xu H."/>
            <person name="Li N."/>
            <person name="Zhao C."/>
            <person name="Li S."/>
            <person name="Dong L."/>
            <person name="Huang Y."/>
            <person name="Li L."/>
            <person name="Xi Y."/>
            <person name="Qi Q."/>
            <person name="Li W."/>
            <person name="Zhang B."/>
            <person name="Hu W."/>
            <person name="Zhang Y."/>
            <person name="Tian X."/>
            <person name="Jiao Y."/>
            <person name="Liang X."/>
            <person name="Jin J."/>
            <person name="Gao L."/>
            <person name="Zheng W."/>
            <person name="Hao B."/>
            <person name="Liu S.-M."/>
            <person name="Wang W."/>
            <person name="Yuan L."/>
            <person name="Cao M."/>
            <person name="McDermott J."/>
            <person name="Samudrala R."/>
            <person name="Wang J."/>
            <person name="Wong G.K.-S."/>
            <person name="Yang H."/>
        </authorList>
    </citation>
    <scope>NUCLEOTIDE SEQUENCE [LARGE SCALE GENOMIC DNA]</scope>
    <source>
        <strain>cv. Nipponbare</strain>
    </source>
</reference>
<gene>
    <name type="primary">H2B.3</name>
    <name type="ordered locus">Os01g0149400</name>
    <name type="ordered locus">LOC_Os01g05610</name>
    <name type="ORF">OsJ_000370</name>
    <name type="ORF">P0434B04.27</name>
</gene>
<comment type="function">
    <text>Core component of nucleosome. Nucleosomes wrap and compact DNA into chromatin, limiting DNA accessibility to the cellular machineries which require DNA as a template. Histones thereby play a central role in transcription regulation, DNA repair, DNA replication and chromosomal stability. DNA accessibility is regulated via a complex set of post-translational modifications of histones, also called histone code, and nucleosome remodeling.</text>
</comment>
<comment type="subunit">
    <text>The nucleosome is a histone octamer containing two molecules each of H2A, H2B, H3 and H4 assembled in one H3-H4 heterotetramer and two H2A-H2B heterodimers. The octamer wraps approximately 147 bp of DNA.</text>
</comment>
<comment type="subcellular location">
    <subcellularLocation>
        <location evidence="1">Nucleus</location>
    </subcellularLocation>
    <subcellularLocation>
        <location evidence="1">Chromosome</location>
    </subcellularLocation>
</comment>
<comment type="PTM">
    <text evidence="1">Can be acetylated to form H2BK6ac and H2BK33ac.</text>
</comment>
<comment type="PTM">
    <text evidence="1">Monoubiquitinated by BRE1 to form H2BK143ub1 and deubiquitinated by UBP26. Required for heterochromatic histone H3 di- and trimethylation at H3K4me. May give a specific tag for epigenetic transcriptional activation (By similarity).</text>
</comment>
<comment type="similarity">
    <text evidence="3">Belongs to the histone H2B family.</text>
</comment>
<comment type="caution">
    <text evidence="3">To ensure consistency between histone entries, we follow the 'Brno' nomenclature for histone modifications, with positions referring to those used in the literature for the 'closest' model organism. Due to slight variations in histone sequences between organisms and to the presence of initiator methionine in UniProtKB/Swiss-Prot sequences, the actual positions of modified amino acids in the sequence generally differ. In this entry the following conventions are used: H2BK6ac = acetylated Lys-7; H2BK33ac = acetylated Lys-37; H2BK143ub1 = monoubiquitinated Lys-149.</text>
</comment>
<feature type="initiator methionine" description="Removed" evidence="1">
    <location>
        <position position="1"/>
    </location>
</feature>
<feature type="chain" id="PRO_0000294181" description="Histone H2B.3">
    <location>
        <begin position="2"/>
        <end position="153"/>
    </location>
</feature>
<feature type="region of interest" description="Disordered" evidence="2">
    <location>
        <begin position="1"/>
        <end position="61"/>
    </location>
</feature>
<feature type="compositionally biased region" description="Basic and acidic residues" evidence="2">
    <location>
        <begin position="1"/>
        <end position="28"/>
    </location>
</feature>
<feature type="compositionally biased region" description="Basic and acidic residues" evidence="2">
    <location>
        <begin position="36"/>
        <end position="53"/>
    </location>
</feature>
<feature type="modified residue" description="N6-acetyllysine" evidence="1">
    <location>
        <position position="7"/>
    </location>
</feature>
<feature type="modified residue" description="N6-acetyllysine" evidence="1">
    <location>
        <position position="37"/>
    </location>
</feature>
<feature type="cross-link" description="Glycyl lysine isopeptide (Lys-Gly) (interchain with G-Cter in ubiquitin)" evidence="1">
    <location>
        <position position="149"/>
    </location>
</feature>
<accession>Q94JJ7</accession>
<organism>
    <name type="scientific">Oryza sativa subsp. japonica</name>
    <name type="common">Rice</name>
    <dbReference type="NCBI Taxonomy" id="39947"/>
    <lineage>
        <taxon>Eukaryota</taxon>
        <taxon>Viridiplantae</taxon>
        <taxon>Streptophyta</taxon>
        <taxon>Embryophyta</taxon>
        <taxon>Tracheophyta</taxon>
        <taxon>Spermatophyta</taxon>
        <taxon>Magnoliopsida</taxon>
        <taxon>Liliopsida</taxon>
        <taxon>Poales</taxon>
        <taxon>Poaceae</taxon>
        <taxon>BOP clade</taxon>
        <taxon>Oryzoideae</taxon>
        <taxon>Oryzeae</taxon>
        <taxon>Oryzinae</taxon>
        <taxon>Oryza</taxon>
        <taxon>Oryza sativa</taxon>
    </lineage>
</organism>
<name>H2B3_ORYSJ</name>
<keyword id="KW-0007">Acetylation</keyword>
<keyword id="KW-0158">Chromosome</keyword>
<keyword id="KW-0238">DNA-binding</keyword>
<keyword id="KW-1017">Isopeptide bond</keyword>
<keyword id="KW-0544">Nucleosome core</keyword>
<keyword id="KW-0539">Nucleus</keyword>
<keyword id="KW-1185">Reference proteome</keyword>
<keyword id="KW-0832">Ubl conjugation</keyword>
<proteinExistence type="inferred from homology"/>
<sequence>MAPKAEKKPAAKKPAEEEPAAEKAEKAPAGKKPKAEKRLPAGKAEKGSGEGRKAGRKKAKKSVETYKIYIFKVLKQVHPDIGISSKAMSIMNSFINDIFEKLAGESAKLARYNKKPTITSREIQTSVRLVLPGELAKHAVSEGTKAVTKFTSA</sequence>